<organism>
    <name type="scientific">Campylobacter fetus subsp. fetus (strain 82-40)</name>
    <dbReference type="NCBI Taxonomy" id="360106"/>
    <lineage>
        <taxon>Bacteria</taxon>
        <taxon>Pseudomonadati</taxon>
        <taxon>Campylobacterota</taxon>
        <taxon>Epsilonproteobacteria</taxon>
        <taxon>Campylobacterales</taxon>
        <taxon>Campylobacteraceae</taxon>
        <taxon>Campylobacter</taxon>
    </lineage>
</organism>
<comment type="function">
    <text evidence="1">Endonuclease IV plays a role in DNA repair. It cleaves phosphodiester bonds at apurinic or apyrimidinic (AP) sites, generating a 3'-hydroxyl group and a 5'-terminal sugar phosphate.</text>
</comment>
<comment type="catalytic activity">
    <reaction evidence="1">
        <text>Endonucleolytic cleavage to 5'-phosphooligonucleotide end-products.</text>
        <dbReference type="EC" id="3.1.21.2"/>
    </reaction>
</comment>
<comment type="cofactor">
    <cofactor evidence="1">
        <name>Zn(2+)</name>
        <dbReference type="ChEBI" id="CHEBI:29105"/>
    </cofactor>
    <text evidence="1">Binds 3 Zn(2+) ions.</text>
</comment>
<comment type="similarity">
    <text evidence="1">Belongs to the AP endonuclease 2 family.</text>
</comment>
<accession>A0RRG4</accession>
<sequence length="282" mass="31431">MKYIGAHVSASGGVSNAPLNAKSIGADAFALFVKNQRQWSAKPLTKSEISSFKTNLKNANISLEHILPHNSYLINLGHPDPQQRKKSIDAFLDEIYRCDLLDLKMINFHPGSHLKEIDENICLSNISSSINYILENSSGIKLVIENTAGQGSNMGFKFEHLGYLVKNSCDKNRIGVCIDTCHLFCSGYDIRSKSAYEKTMDDFGKIVGFEFLSGMHLNDSKCDLASRKDRHESLGKGCIGWSGFENIMNDKRIDEIPLILETIDNSIWADEIIALRNLIKGN</sequence>
<proteinExistence type="inferred from homology"/>
<protein>
    <recommendedName>
        <fullName evidence="1">Probable endonuclease 4</fullName>
        <ecNumber evidence="1">3.1.21.2</ecNumber>
    </recommendedName>
    <alternativeName>
        <fullName evidence="1">Endodeoxyribonuclease IV</fullName>
    </alternativeName>
    <alternativeName>
        <fullName evidence="1">Endonuclease IV</fullName>
    </alternativeName>
</protein>
<gene>
    <name evidence="1" type="primary">nfo</name>
    <name type="ordered locus">CFF8240_1670</name>
</gene>
<reference key="1">
    <citation type="submission" date="2006-11" db="EMBL/GenBank/DDBJ databases">
        <title>Sequence of Campylobacter fetus subsp. fetus 82-40.</title>
        <authorList>
            <person name="Fouts D.E."/>
            <person name="Nelson K.E."/>
        </authorList>
    </citation>
    <scope>NUCLEOTIDE SEQUENCE [LARGE SCALE GENOMIC DNA]</scope>
    <source>
        <strain>82-40</strain>
    </source>
</reference>
<dbReference type="EC" id="3.1.21.2" evidence="1"/>
<dbReference type="EMBL" id="CP000487">
    <property type="protein sequence ID" value="ABK82365.1"/>
    <property type="molecule type" value="Genomic_DNA"/>
</dbReference>
<dbReference type="RefSeq" id="WP_002850743.1">
    <property type="nucleotide sequence ID" value="NC_008599.1"/>
</dbReference>
<dbReference type="SMR" id="A0RRG4"/>
<dbReference type="GeneID" id="61065484"/>
<dbReference type="KEGG" id="cff:CFF8240_1670"/>
<dbReference type="eggNOG" id="COG0648">
    <property type="taxonomic scope" value="Bacteria"/>
</dbReference>
<dbReference type="HOGENOM" id="CLU_025885_0_4_7"/>
<dbReference type="Proteomes" id="UP000000760">
    <property type="component" value="Chromosome"/>
</dbReference>
<dbReference type="GO" id="GO:0008833">
    <property type="term" value="F:deoxyribonuclease IV (phage-T4-induced) activity"/>
    <property type="evidence" value="ECO:0007669"/>
    <property type="project" value="UniProtKB-UniRule"/>
</dbReference>
<dbReference type="GO" id="GO:0003677">
    <property type="term" value="F:DNA binding"/>
    <property type="evidence" value="ECO:0007669"/>
    <property type="project" value="InterPro"/>
</dbReference>
<dbReference type="GO" id="GO:0003906">
    <property type="term" value="F:DNA-(apurinic or apyrimidinic site) endonuclease activity"/>
    <property type="evidence" value="ECO:0007669"/>
    <property type="project" value="TreeGrafter"/>
</dbReference>
<dbReference type="GO" id="GO:0008081">
    <property type="term" value="F:phosphoric diester hydrolase activity"/>
    <property type="evidence" value="ECO:0007669"/>
    <property type="project" value="TreeGrafter"/>
</dbReference>
<dbReference type="GO" id="GO:0008270">
    <property type="term" value="F:zinc ion binding"/>
    <property type="evidence" value="ECO:0007669"/>
    <property type="project" value="UniProtKB-UniRule"/>
</dbReference>
<dbReference type="GO" id="GO:0006284">
    <property type="term" value="P:base-excision repair"/>
    <property type="evidence" value="ECO:0007669"/>
    <property type="project" value="TreeGrafter"/>
</dbReference>
<dbReference type="CDD" id="cd00019">
    <property type="entry name" value="AP2Ec"/>
    <property type="match status" value="1"/>
</dbReference>
<dbReference type="FunFam" id="3.20.20.150:FF:000001">
    <property type="entry name" value="Probable endonuclease 4"/>
    <property type="match status" value="1"/>
</dbReference>
<dbReference type="Gene3D" id="3.20.20.150">
    <property type="entry name" value="Divalent-metal-dependent TIM barrel enzymes"/>
    <property type="match status" value="1"/>
</dbReference>
<dbReference type="HAMAP" id="MF_00152">
    <property type="entry name" value="Nfo"/>
    <property type="match status" value="1"/>
</dbReference>
<dbReference type="InterPro" id="IPR001719">
    <property type="entry name" value="AP_endonuc_2"/>
</dbReference>
<dbReference type="InterPro" id="IPR018246">
    <property type="entry name" value="AP_endonuc_F2_Zn_BS"/>
</dbReference>
<dbReference type="InterPro" id="IPR036237">
    <property type="entry name" value="Xyl_isomerase-like_sf"/>
</dbReference>
<dbReference type="InterPro" id="IPR013022">
    <property type="entry name" value="Xyl_isomerase-like_TIM-brl"/>
</dbReference>
<dbReference type="NCBIfam" id="TIGR00587">
    <property type="entry name" value="nfo"/>
    <property type="match status" value="1"/>
</dbReference>
<dbReference type="NCBIfam" id="NF002199">
    <property type="entry name" value="PRK01060.1-4"/>
    <property type="match status" value="1"/>
</dbReference>
<dbReference type="PANTHER" id="PTHR21445:SF0">
    <property type="entry name" value="APURINIC-APYRIMIDINIC ENDONUCLEASE"/>
    <property type="match status" value="1"/>
</dbReference>
<dbReference type="PANTHER" id="PTHR21445">
    <property type="entry name" value="ENDONUCLEASE IV ENDODEOXYRIBONUCLEASE IV"/>
    <property type="match status" value="1"/>
</dbReference>
<dbReference type="Pfam" id="PF01261">
    <property type="entry name" value="AP_endonuc_2"/>
    <property type="match status" value="1"/>
</dbReference>
<dbReference type="SMART" id="SM00518">
    <property type="entry name" value="AP2Ec"/>
    <property type="match status" value="1"/>
</dbReference>
<dbReference type="SUPFAM" id="SSF51658">
    <property type="entry name" value="Xylose isomerase-like"/>
    <property type="match status" value="1"/>
</dbReference>
<dbReference type="PROSITE" id="PS00730">
    <property type="entry name" value="AP_NUCLEASE_F2_2"/>
    <property type="match status" value="1"/>
</dbReference>
<dbReference type="PROSITE" id="PS00731">
    <property type="entry name" value="AP_NUCLEASE_F2_3"/>
    <property type="match status" value="1"/>
</dbReference>
<dbReference type="PROSITE" id="PS51432">
    <property type="entry name" value="AP_NUCLEASE_F2_4"/>
    <property type="match status" value="1"/>
</dbReference>
<keyword id="KW-0227">DNA damage</keyword>
<keyword id="KW-0234">DNA repair</keyword>
<keyword id="KW-0255">Endonuclease</keyword>
<keyword id="KW-0378">Hydrolase</keyword>
<keyword id="KW-0479">Metal-binding</keyword>
<keyword id="KW-0540">Nuclease</keyword>
<keyword id="KW-0862">Zinc</keyword>
<feature type="chain" id="PRO_1000011295" description="Probable endonuclease 4">
    <location>
        <begin position="1"/>
        <end position="282"/>
    </location>
</feature>
<feature type="binding site" evidence="1">
    <location>
        <position position="69"/>
    </location>
    <ligand>
        <name>Zn(2+)</name>
        <dbReference type="ChEBI" id="CHEBI:29105"/>
        <label>1</label>
    </ligand>
</feature>
<feature type="binding site" evidence="1">
    <location>
        <position position="109"/>
    </location>
    <ligand>
        <name>Zn(2+)</name>
        <dbReference type="ChEBI" id="CHEBI:29105"/>
        <label>1</label>
    </ligand>
</feature>
<feature type="binding site" evidence="1">
    <location>
        <position position="145"/>
    </location>
    <ligand>
        <name>Zn(2+)</name>
        <dbReference type="ChEBI" id="CHEBI:29105"/>
        <label>1</label>
    </ligand>
</feature>
<feature type="binding site" evidence="1">
    <location>
        <position position="145"/>
    </location>
    <ligand>
        <name>Zn(2+)</name>
        <dbReference type="ChEBI" id="CHEBI:29105"/>
        <label>2</label>
    </ligand>
</feature>
<feature type="binding site" evidence="1">
    <location>
        <position position="179"/>
    </location>
    <ligand>
        <name>Zn(2+)</name>
        <dbReference type="ChEBI" id="CHEBI:29105"/>
        <label>2</label>
    </ligand>
</feature>
<feature type="binding site" evidence="1">
    <location>
        <position position="182"/>
    </location>
    <ligand>
        <name>Zn(2+)</name>
        <dbReference type="ChEBI" id="CHEBI:29105"/>
        <label>3</label>
    </ligand>
</feature>
<feature type="binding site" evidence="1">
    <location>
        <position position="216"/>
    </location>
    <ligand>
        <name>Zn(2+)</name>
        <dbReference type="ChEBI" id="CHEBI:29105"/>
        <label>2</label>
    </ligand>
</feature>
<feature type="binding site" evidence="1">
    <location>
        <position position="229"/>
    </location>
    <ligand>
        <name>Zn(2+)</name>
        <dbReference type="ChEBI" id="CHEBI:29105"/>
        <label>3</label>
    </ligand>
</feature>
<feature type="binding site" evidence="1">
    <location>
        <position position="231"/>
    </location>
    <ligand>
        <name>Zn(2+)</name>
        <dbReference type="ChEBI" id="CHEBI:29105"/>
        <label>3</label>
    </ligand>
</feature>
<feature type="binding site" evidence="1">
    <location>
        <position position="261"/>
    </location>
    <ligand>
        <name>Zn(2+)</name>
        <dbReference type="ChEBI" id="CHEBI:29105"/>
        <label>2</label>
    </ligand>
</feature>
<evidence type="ECO:0000255" key="1">
    <source>
        <dbReference type="HAMAP-Rule" id="MF_00152"/>
    </source>
</evidence>
<name>END4_CAMFF</name>